<sequence length="378" mass="41456">MKITAVRTHLLEHRLDTPFESASMRFDRRAHVLVEIECDDGTVGWGECLGPARPNAAVVQAYSGWLIGQDPRQTEKIWAVLYNALRDQGQRGLSLTALSGIDIALWDIKGKHYGASISMLLGGRWRESVRAYATGSFKRDNVDRVSDNASEMAERRAEGFHACKIKIGFGVEEDLRVIAAVREAIGPDMRLMIDANHGYTVTEAITLGDRAAGFGIDWFEEPVVPEQLDAYARVRAGQPIPVAGGETWHGRYGMWQALSAGAVDILQPDLCGCGGFSEIQKIATLATLHGVRIVPHVWGTGVQIAAALQFMAAMTPDPVRVNPIEPIMEFDRTHNPFRQAVLREPLEAVNGVVTIPDGPGLGIEINRDALTEFRMPDP</sequence>
<organism>
    <name type="scientific">Agrobacterium fabrum (strain C58 / ATCC 33970)</name>
    <name type="common">Agrobacterium tumefaciens (strain C58)</name>
    <dbReference type="NCBI Taxonomy" id="176299"/>
    <lineage>
        <taxon>Bacteria</taxon>
        <taxon>Pseudomonadati</taxon>
        <taxon>Pseudomonadota</taxon>
        <taxon>Alphaproteobacteria</taxon>
        <taxon>Hyphomicrobiales</taxon>
        <taxon>Rhizobiaceae</taxon>
        <taxon>Rhizobium/Agrobacterium group</taxon>
        <taxon>Agrobacterium</taxon>
        <taxon>Agrobacterium tumefaciens complex</taxon>
    </lineage>
</organism>
<dbReference type="EC" id="5.5.1.27" evidence="2 3"/>
<dbReference type="EMBL" id="AE007870">
    <property type="protein sequence ID" value="AAK90247.1"/>
    <property type="molecule type" value="Genomic_DNA"/>
</dbReference>
<dbReference type="PIR" id="AE2942">
    <property type="entry name" value="AE2942"/>
</dbReference>
<dbReference type="PIR" id="E98340">
    <property type="entry name" value="E98340"/>
</dbReference>
<dbReference type="RefSeq" id="NP_357462.1">
    <property type="nucleotide sequence ID" value="NC_003063.2"/>
</dbReference>
<dbReference type="RefSeq" id="WP_010972789.1">
    <property type="nucleotide sequence ID" value="NC_003063.2"/>
</dbReference>
<dbReference type="PDB" id="4GGB">
    <property type="method" value="X-ray"/>
    <property type="resolution" value="2.00 A"/>
    <property type="chains" value="A=1-378"/>
</dbReference>
<dbReference type="PDB" id="4HPN">
    <property type="method" value="X-ray"/>
    <property type="resolution" value="1.60 A"/>
    <property type="chains" value="A=1-378"/>
</dbReference>
<dbReference type="PDBsum" id="4GGB"/>
<dbReference type="PDBsum" id="4HPN"/>
<dbReference type="SMR" id="A9CEQ8"/>
<dbReference type="STRING" id="176299.Atu3139"/>
<dbReference type="DNASU" id="1134941"/>
<dbReference type="EnsemblBacteria" id="AAK90247">
    <property type="protein sequence ID" value="AAK90247"/>
    <property type="gene ID" value="Atu3139"/>
</dbReference>
<dbReference type="GeneID" id="1134941"/>
<dbReference type="KEGG" id="atu:Atu3139"/>
<dbReference type="PATRIC" id="fig|176299.10.peg.2984"/>
<dbReference type="eggNOG" id="COG4948">
    <property type="taxonomic scope" value="Bacteria"/>
</dbReference>
<dbReference type="HOGENOM" id="CLU_030273_3_0_5"/>
<dbReference type="OrthoDB" id="9802699at2"/>
<dbReference type="PhylomeDB" id="A9CEQ8"/>
<dbReference type="BioCyc" id="AGRO:ATU3139-MONOMER"/>
<dbReference type="BioCyc" id="MetaCyc:MONOMER-18901"/>
<dbReference type="BRENDA" id="5.5.1.27">
    <property type="organism ID" value="200"/>
</dbReference>
<dbReference type="UniPathway" id="UPA01050"/>
<dbReference type="EvolutionaryTrace" id="A9CEQ8"/>
<dbReference type="Proteomes" id="UP000000813">
    <property type="component" value="Chromosome linear"/>
</dbReference>
<dbReference type="GO" id="GO:0016836">
    <property type="term" value="F:hydro-lyase activity"/>
    <property type="evidence" value="ECO:0007669"/>
    <property type="project" value="TreeGrafter"/>
</dbReference>
<dbReference type="GO" id="GO:0016853">
    <property type="term" value="F:isomerase activity"/>
    <property type="evidence" value="ECO:0007669"/>
    <property type="project" value="UniProtKB-KW"/>
</dbReference>
<dbReference type="GO" id="GO:0000287">
    <property type="term" value="F:magnesium ion binding"/>
    <property type="evidence" value="ECO:0007669"/>
    <property type="project" value="TreeGrafter"/>
</dbReference>
<dbReference type="GO" id="GO:0009063">
    <property type="term" value="P:amino acid catabolic process"/>
    <property type="evidence" value="ECO:0007669"/>
    <property type="project" value="InterPro"/>
</dbReference>
<dbReference type="GO" id="GO:0016052">
    <property type="term" value="P:carbohydrate catabolic process"/>
    <property type="evidence" value="ECO:0007669"/>
    <property type="project" value="TreeGrafter"/>
</dbReference>
<dbReference type="CDD" id="cd03316">
    <property type="entry name" value="MR_like"/>
    <property type="match status" value="1"/>
</dbReference>
<dbReference type="Gene3D" id="3.20.20.120">
    <property type="entry name" value="Enolase-like C-terminal domain"/>
    <property type="match status" value="1"/>
</dbReference>
<dbReference type="Gene3D" id="3.30.390.10">
    <property type="entry name" value="Enolase-like, N-terminal domain"/>
    <property type="match status" value="1"/>
</dbReference>
<dbReference type="InterPro" id="IPR036849">
    <property type="entry name" value="Enolase-like_C_sf"/>
</dbReference>
<dbReference type="InterPro" id="IPR029017">
    <property type="entry name" value="Enolase-like_N"/>
</dbReference>
<dbReference type="InterPro" id="IPR029065">
    <property type="entry name" value="Enolase_C-like"/>
</dbReference>
<dbReference type="InterPro" id="IPR034618">
    <property type="entry name" value="GLI"/>
</dbReference>
<dbReference type="InterPro" id="IPR018110">
    <property type="entry name" value="Mandel_Rmase/mucon_lact_enz_CS"/>
</dbReference>
<dbReference type="InterPro" id="IPR013342">
    <property type="entry name" value="Mandelate_racemase_C"/>
</dbReference>
<dbReference type="InterPro" id="IPR013341">
    <property type="entry name" value="Mandelate_racemase_N_dom"/>
</dbReference>
<dbReference type="InterPro" id="IPR046945">
    <property type="entry name" value="RHMD-like"/>
</dbReference>
<dbReference type="PANTHER" id="PTHR13794">
    <property type="entry name" value="ENOLASE SUPERFAMILY, MANDELATE RACEMASE"/>
    <property type="match status" value="1"/>
</dbReference>
<dbReference type="PANTHER" id="PTHR13794:SF58">
    <property type="entry name" value="MITOCHONDRIAL ENOLASE SUPERFAMILY MEMBER 1"/>
    <property type="match status" value="1"/>
</dbReference>
<dbReference type="Pfam" id="PF13378">
    <property type="entry name" value="MR_MLE_C"/>
    <property type="match status" value="1"/>
</dbReference>
<dbReference type="Pfam" id="PF02746">
    <property type="entry name" value="MR_MLE_N"/>
    <property type="match status" value="1"/>
</dbReference>
<dbReference type="SFLD" id="SFLDF00553">
    <property type="entry name" value="galactarolactone_cycloisomeras"/>
    <property type="match status" value="1"/>
</dbReference>
<dbReference type="SFLD" id="SFLDG00179">
    <property type="entry name" value="mandelate_racemase"/>
    <property type="match status" value="1"/>
</dbReference>
<dbReference type="SMART" id="SM00922">
    <property type="entry name" value="MR_MLE"/>
    <property type="match status" value="1"/>
</dbReference>
<dbReference type="SUPFAM" id="SSF51604">
    <property type="entry name" value="Enolase C-terminal domain-like"/>
    <property type="match status" value="1"/>
</dbReference>
<dbReference type="SUPFAM" id="SSF54826">
    <property type="entry name" value="Enolase N-terminal domain-like"/>
    <property type="match status" value="1"/>
</dbReference>
<dbReference type="PROSITE" id="PS00908">
    <property type="entry name" value="MR_MLE_1"/>
    <property type="match status" value="1"/>
</dbReference>
<accession>A9CEQ8</accession>
<gene>
    <name type="primary">gci</name>
    <name type="ordered locus">Atu3139</name>
</gene>
<comment type="function">
    <text evidence="2 3">Catalyzes the ring opening of D-galactaro-1,4-lactone to yield 5-keto-4-deoxy-D-glucarate (KDG) via a beta-elimination reaction. This is a step in the oxidative degradation pathway of D-galacturonate, which allows A.tumefaciens to utilize D-galacturonate as a sole carbon source. To a lesser extent, can also use D-glucaro-1,4-lactone as substrate to produce KDG, but cannot use D-galactaro-1,5-lactone, D-glucaro-6,3-lactone and linear D-glucarate.</text>
</comment>
<comment type="catalytic activity">
    <reaction evidence="2 3">
        <text>D-glucaro-1,4-lactone = 5-dehydro-4-deoxy-D-glucarate + H(+)</text>
        <dbReference type="Rhea" id="RHEA:45604"/>
        <dbReference type="ChEBI" id="CHEBI:15378"/>
        <dbReference type="ChEBI" id="CHEBI:42819"/>
        <dbReference type="ChEBI" id="CHEBI:85336"/>
        <dbReference type="EC" id="5.5.1.27"/>
    </reaction>
</comment>
<comment type="catalytic activity">
    <reaction evidence="2 3">
        <text>D-galactaro-1,4-lactone = 5-dehydro-4-deoxy-D-glucarate + H(+)</text>
        <dbReference type="Rhea" id="RHEA:45600"/>
        <dbReference type="ChEBI" id="CHEBI:15378"/>
        <dbReference type="ChEBI" id="CHEBI:42819"/>
        <dbReference type="ChEBI" id="CHEBI:85317"/>
        <dbReference type="EC" id="5.5.1.27"/>
    </reaction>
</comment>
<comment type="cofactor">
    <cofactor evidence="2">
        <name>Mg(2+)</name>
        <dbReference type="ChEBI" id="CHEBI:18420"/>
    </cofactor>
</comment>
<comment type="biophysicochemical properties">
    <phDependence>
        <text evidence="2">Optimum pH is 8.5.</text>
    </phDependence>
</comment>
<comment type="pathway">
    <text evidence="3">Carbohydrate acid metabolism; D-galacturonate degradation via prokaryotic oxidative pathway.</text>
</comment>
<comment type="subunit">
    <text evidence="2 4">Homooctamer.</text>
</comment>
<comment type="similarity">
    <text evidence="5">Belongs to the mandelate racemase/muconate lactonizing enzyme family.</text>
</comment>
<evidence type="ECO:0000250" key="1"/>
<evidence type="ECO:0000269" key="2">
    <source>
    </source>
</evidence>
<evidence type="ECO:0000269" key="3">
    <source>
    </source>
</evidence>
<evidence type="ECO:0000269" key="4">
    <source ref="5"/>
</evidence>
<evidence type="ECO:0000305" key="5"/>
<evidence type="ECO:0007829" key="6">
    <source>
        <dbReference type="PDB" id="4GGB"/>
    </source>
</evidence>
<evidence type="ECO:0007829" key="7">
    <source>
        <dbReference type="PDB" id="4HPN"/>
    </source>
</evidence>
<feature type="chain" id="PRO_0000429433" description="D-galactarolactone cycloisomerase">
    <location>
        <begin position="1"/>
        <end position="378"/>
    </location>
</feature>
<feature type="active site" description="Proton acceptor" evidence="1">
    <location>
        <position position="296"/>
    </location>
</feature>
<feature type="binding site">
    <location>
        <position position="194"/>
    </location>
    <ligand>
        <name>Mg(2+)</name>
        <dbReference type="ChEBI" id="CHEBI:18420"/>
    </ligand>
</feature>
<feature type="binding site">
    <location>
        <position position="220"/>
    </location>
    <ligand>
        <name>Mg(2+)</name>
        <dbReference type="ChEBI" id="CHEBI:18420"/>
    </ligand>
</feature>
<feature type="binding site">
    <location>
        <position position="246"/>
    </location>
    <ligand>
        <name>Mg(2+)</name>
        <dbReference type="ChEBI" id="CHEBI:18420"/>
    </ligand>
</feature>
<feature type="site" description="Increases basicity of active site His" evidence="1">
    <location>
        <position position="269"/>
    </location>
</feature>
<feature type="strand" evidence="7">
    <location>
        <begin position="3"/>
        <end position="20"/>
    </location>
</feature>
<feature type="strand" evidence="7">
    <location>
        <begin position="25"/>
        <end position="38"/>
    </location>
</feature>
<feature type="strand" evidence="7">
    <location>
        <begin position="43"/>
        <end position="48"/>
    </location>
</feature>
<feature type="helix" evidence="7">
    <location>
        <begin position="52"/>
        <end position="63"/>
    </location>
</feature>
<feature type="turn" evidence="7">
    <location>
        <begin position="64"/>
        <end position="68"/>
    </location>
</feature>
<feature type="helix" evidence="7">
    <location>
        <begin position="74"/>
        <end position="84"/>
    </location>
</feature>
<feature type="helix" evidence="6">
    <location>
        <begin position="85"/>
        <end position="88"/>
    </location>
</feature>
<feature type="helix" evidence="7">
    <location>
        <begin position="93"/>
        <end position="113"/>
    </location>
</feature>
<feature type="helix" evidence="7">
    <location>
        <begin position="117"/>
        <end position="120"/>
    </location>
</feature>
<feature type="strand" evidence="7">
    <location>
        <begin position="127"/>
        <end position="134"/>
    </location>
</feature>
<feature type="helix" evidence="7">
    <location>
        <begin position="144"/>
        <end position="157"/>
    </location>
</feature>
<feature type="strand" evidence="7">
    <location>
        <begin position="161"/>
        <end position="166"/>
    </location>
</feature>
<feature type="helix" evidence="7">
    <location>
        <begin position="171"/>
        <end position="185"/>
    </location>
</feature>
<feature type="turn" evidence="7">
    <location>
        <begin position="186"/>
        <end position="188"/>
    </location>
</feature>
<feature type="strand" evidence="7">
    <location>
        <begin position="189"/>
        <end position="194"/>
    </location>
</feature>
<feature type="helix" evidence="7">
    <location>
        <begin position="201"/>
        <end position="211"/>
    </location>
</feature>
<feature type="helix" evidence="7">
    <location>
        <begin position="212"/>
        <end position="214"/>
    </location>
</feature>
<feature type="strand" evidence="6">
    <location>
        <begin position="217"/>
        <end position="220"/>
    </location>
</feature>
<feature type="helix" evidence="7">
    <location>
        <begin position="228"/>
        <end position="237"/>
    </location>
</feature>
<feature type="strand" evidence="7">
    <location>
        <begin position="238"/>
        <end position="240"/>
    </location>
</feature>
<feature type="strand" evidence="7">
    <location>
        <begin position="242"/>
        <end position="244"/>
    </location>
</feature>
<feature type="helix" evidence="7">
    <location>
        <begin position="250"/>
        <end position="259"/>
    </location>
</feature>
<feature type="strand" evidence="7">
    <location>
        <begin position="264"/>
        <end position="266"/>
    </location>
</feature>
<feature type="turn" evidence="7">
    <location>
        <begin position="270"/>
        <end position="274"/>
    </location>
</feature>
<feature type="helix" evidence="7">
    <location>
        <begin position="275"/>
        <end position="289"/>
    </location>
</feature>
<feature type="helix" evidence="7">
    <location>
        <begin position="301"/>
        <end position="313"/>
    </location>
</feature>
<feature type="strand" evidence="7">
    <location>
        <begin position="328"/>
        <end position="331"/>
    </location>
</feature>
<feature type="helix" evidence="7">
    <location>
        <begin position="337"/>
        <end position="340"/>
    </location>
</feature>
<feature type="strand" evidence="7">
    <location>
        <begin position="342"/>
        <end position="344"/>
    </location>
</feature>
<feature type="strand" evidence="7">
    <location>
        <begin position="352"/>
        <end position="354"/>
    </location>
</feature>
<feature type="strand" evidence="7">
    <location>
        <begin position="358"/>
        <end position="360"/>
    </location>
</feature>
<feature type="helix" evidence="7">
    <location>
        <begin position="367"/>
        <end position="372"/>
    </location>
</feature>
<proteinExistence type="evidence at protein level"/>
<protein>
    <recommendedName>
        <fullName>D-galactarolactone cycloisomerase</fullName>
        <ecNumber evidence="2 3">5.5.1.27</ecNumber>
    </recommendedName>
</protein>
<reference key="1">
    <citation type="journal article" date="2001" name="Science">
        <title>The genome of the natural genetic engineer Agrobacterium tumefaciens C58.</title>
        <authorList>
            <person name="Wood D.W."/>
            <person name="Setubal J.C."/>
            <person name="Kaul R."/>
            <person name="Monks D.E."/>
            <person name="Kitajima J.P."/>
            <person name="Okura V.K."/>
            <person name="Zhou Y."/>
            <person name="Chen L."/>
            <person name="Wood G.E."/>
            <person name="Almeida N.F. Jr."/>
            <person name="Woo L."/>
            <person name="Chen Y."/>
            <person name="Paulsen I.T."/>
            <person name="Eisen J.A."/>
            <person name="Karp P.D."/>
            <person name="Bovee D. Sr."/>
            <person name="Chapman P."/>
            <person name="Clendenning J."/>
            <person name="Deatherage G."/>
            <person name="Gillet W."/>
            <person name="Grant C."/>
            <person name="Kutyavin T."/>
            <person name="Levy R."/>
            <person name="Li M.-J."/>
            <person name="McClelland E."/>
            <person name="Palmieri A."/>
            <person name="Raymond C."/>
            <person name="Rouse G."/>
            <person name="Saenphimmachak C."/>
            <person name="Wu Z."/>
            <person name="Romero P."/>
            <person name="Gordon D."/>
            <person name="Zhang S."/>
            <person name="Yoo H."/>
            <person name="Tao Y."/>
            <person name="Biddle P."/>
            <person name="Jung M."/>
            <person name="Krespan W."/>
            <person name="Perry M."/>
            <person name="Gordon-Kamm B."/>
            <person name="Liao L."/>
            <person name="Kim S."/>
            <person name="Hendrick C."/>
            <person name="Zhao Z.-Y."/>
            <person name="Dolan M."/>
            <person name="Chumley F."/>
            <person name="Tingey S.V."/>
            <person name="Tomb J.-F."/>
            <person name="Gordon M.P."/>
            <person name="Olson M.V."/>
            <person name="Nester E.W."/>
        </authorList>
    </citation>
    <scope>NUCLEOTIDE SEQUENCE [LARGE SCALE GENOMIC DNA]</scope>
    <source>
        <strain>C58 / ATCC 33970</strain>
    </source>
</reference>
<reference key="2">
    <citation type="journal article" date="2001" name="Science">
        <title>Genome sequence of the plant pathogen and biotechnology agent Agrobacterium tumefaciens C58.</title>
        <authorList>
            <person name="Goodner B."/>
            <person name="Hinkle G."/>
            <person name="Gattung S."/>
            <person name="Miller N."/>
            <person name="Blanchard M."/>
            <person name="Qurollo B."/>
            <person name="Goldman B.S."/>
            <person name="Cao Y."/>
            <person name="Askenazi M."/>
            <person name="Halling C."/>
            <person name="Mullin L."/>
            <person name="Houmiel K."/>
            <person name="Gordon J."/>
            <person name="Vaudin M."/>
            <person name="Iartchouk O."/>
            <person name="Epp A."/>
            <person name="Liu F."/>
            <person name="Wollam C."/>
            <person name="Allinger M."/>
            <person name="Doughty D."/>
            <person name="Scott C."/>
            <person name="Lappas C."/>
            <person name="Markelz B."/>
            <person name="Flanagan C."/>
            <person name="Crowell C."/>
            <person name="Gurson J."/>
            <person name="Lomo C."/>
            <person name="Sear C."/>
            <person name="Strub G."/>
            <person name="Cielo C."/>
            <person name="Slater S."/>
        </authorList>
    </citation>
    <scope>NUCLEOTIDE SEQUENCE [LARGE SCALE GENOMIC DNA]</scope>
    <source>
        <strain>C58 / ATCC 33970</strain>
    </source>
</reference>
<reference key="3">
    <citation type="journal article" date="2012" name="J. Biol. Chem.">
        <title>Characterization of a novel Agrobacterium tumefaciens galactarolactone cycloisomerase enzyme for direct conversion of D-galactarolactone to 3-deoxy-2-keto-L-threo-hexarate.</title>
        <authorList>
            <person name="Andberg M."/>
            <person name="Maaheimo H."/>
            <person name="Boer H."/>
            <person name="Penttila M."/>
            <person name="Koivula A."/>
            <person name="Richard P."/>
        </authorList>
    </citation>
    <scope>IDENTIFICATION BY MASS SPECTROMETRY</scope>
    <scope>FUNCTION</scope>
    <scope>CATALYTIC ACTIVITY</scope>
    <scope>GENE NAME</scope>
    <scope>SUBSTRATE SPECIFICITY</scope>
    <scope>COFACTOR</scope>
    <scope>PH DEPENDENCE</scope>
    <scope>SUBUNIT</scope>
    <source>
        <strain>C58 / ATCC 33970</strain>
    </source>
</reference>
<reference key="4">
    <citation type="journal article" date="2014" name="Biochemistry">
        <title>Galactaro delta-lactone isomerase: lactone isomerization by a member of the amidohydrolase superfamily.</title>
        <authorList>
            <person name="Bouvier J.T."/>
            <person name="Groninger-Poe F.P."/>
            <person name="Vetting M."/>
            <person name="Almo S.C."/>
            <person name="Gerlt J.A."/>
        </authorList>
    </citation>
    <scope>FUNCTION</scope>
    <scope>CATALYTIC ACTIVITY</scope>
    <scope>SUBSTRATE SPECIFICITY</scope>
    <scope>PATHWAY</scope>
    <source>
        <strain>C58 / ATCC 33970</strain>
    </source>
</reference>
<reference key="5">
    <citation type="submission" date="2012-10" db="PDB data bank">
        <title>Crystal structures of a proposed galactarolactone cycloisomerase from Agrobacterium tumefaciens, target EFI-500704, with bound Ca, ordered and disordered loops.</title>
        <authorList>
            <consortium name="Enzyme Function Initiative (EFI)"/>
            <person name="Vetting M.W."/>
            <person name="Bouvier J.T."/>
            <person name="Morisco L.L."/>
            <person name="Wasserman S.R."/>
            <person name="Sojitra S."/>
            <person name="Imker H.J."/>
            <person name="Gerlt J.A."/>
            <person name="Almo S.C."/>
        </authorList>
    </citation>
    <scope>X-RAY CRYSTALLOGRAPHY (1.60 ANGSTROMS) IN COMPLEX WITH CALCIUM</scope>
    <source>
        <strain>C58 / ATCC 33970</strain>
    </source>
</reference>
<keyword id="KW-0002">3D-structure</keyword>
<keyword id="KW-0413">Isomerase</keyword>
<keyword id="KW-0460">Magnesium</keyword>
<keyword id="KW-0479">Metal-binding</keyword>
<keyword id="KW-1185">Reference proteome</keyword>
<name>GCI_AGRFC</name>